<accession>B2T382</accession>
<reference key="1">
    <citation type="journal article" date="2011" name="J. Bacteriol.">
        <title>Complete genome sequence of the plant growth-promoting endophyte Burkholderia phytofirmans strain PsJN.</title>
        <authorList>
            <person name="Weilharter A."/>
            <person name="Mitter B."/>
            <person name="Shin M.V."/>
            <person name="Chain P.S."/>
            <person name="Nowak J."/>
            <person name="Sessitsch A."/>
        </authorList>
    </citation>
    <scope>NUCLEOTIDE SEQUENCE [LARGE SCALE GENOMIC DNA]</scope>
    <source>
        <strain>DSM 17436 / LMG 22146 / PsJN</strain>
    </source>
</reference>
<feature type="chain" id="PRO_1000088866" description="Ribosome-binding factor A">
    <location>
        <begin position="1"/>
        <end position="121"/>
    </location>
</feature>
<name>RBFA_PARPJ</name>
<gene>
    <name evidence="1" type="primary">rbfA</name>
    <name type="ordered locus">Bphyt_1633</name>
</gene>
<dbReference type="EMBL" id="CP001052">
    <property type="protein sequence ID" value="ACD16043.1"/>
    <property type="molecule type" value="Genomic_DNA"/>
</dbReference>
<dbReference type="RefSeq" id="WP_012432654.1">
    <property type="nucleotide sequence ID" value="NC_010681.1"/>
</dbReference>
<dbReference type="SMR" id="B2T382"/>
<dbReference type="STRING" id="398527.Bphyt_1633"/>
<dbReference type="KEGG" id="bpy:Bphyt_1633"/>
<dbReference type="eggNOG" id="COG0858">
    <property type="taxonomic scope" value="Bacteria"/>
</dbReference>
<dbReference type="HOGENOM" id="CLU_089475_5_1_4"/>
<dbReference type="OrthoDB" id="307788at2"/>
<dbReference type="Proteomes" id="UP000001739">
    <property type="component" value="Chromosome 1"/>
</dbReference>
<dbReference type="GO" id="GO:0005829">
    <property type="term" value="C:cytosol"/>
    <property type="evidence" value="ECO:0007669"/>
    <property type="project" value="TreeGrafter"/>
</dbReference>
<dbReference type="GO" id="GO:0043024">
    <property type="term" value="F:ribosomal small subunit binding"/>
    <property type="evidence" value="ECO:0007669"/>
    <property type="project" value="TreeGrafter"/>
</dbReference>
<dbReference type="GO" id="GO:0030490">
    <property type="term" value="P:maturation of SSU-rRNA"/>
    <property type="evidence" value="ECO:0007669"/>
    <property type="project" value="UniProtKB-UniRule"/>
</dbReference>
<dbReference type="Gene3D" id="3.30.300.20">
    <property type="match status" value="1"/>
</dbReference>
<dbReference type="HAMAP" id="MF_00003">
    <property type="entry name" value="RbfA"/>
    <property type="match status" value="1"/>
</dbReference>
<dbReference type="InterPro" id="IPR015946">
    <property type="entry name" value="KH_dom-like_a/b"/>
</dbReference>
<dbReference type="InterPro" id="IPR000238">
    <property type="entry name" value="RbfA"/>
</dbReference>
<dbReference type="InterPro" id="IPR023799">
    <property type="entry name" value="RbfA_dom_sf"/>
</dbReference>
<dbReference type="NCBIfam" id="TIGR00082">
    <property type="entry name" value="rbfA"/>
    <property type="match status" value="1"/>
</dbReference>
<dbReference type="PANTHER" id="PTHR33515">
    <property type="entry name" value="RIBOSOME-BINDING FACTOR A, CHLOROPLASTIC-RELATED"/>
    <property type="match status" value="1"/>
</dbReference>
<dbReference type="PANTHER" id="PTHR33515:SF1">
    <property type="entry name" value="RIBOSOME-BINDING FACTOR A, CHLOROPLASTIC-RELATED"/>
    <property type="match status" value="1"/>
</dbReference>
<dbReference type="Pfam" id="PF02033">
    <property type="entry name" value="RBFA"/>
    <property type="match status" value="1"/>
</dbReference>
<dbReference type="SUPFAM" id="SSF89919">
    <property type="entry name" value="Ribosome-binding factor A, RbfA"/>
    <property type="match status" value="1"/>
</dbReference>
<organism>
    <name type="scientific">Paraburkholderia phytofirmans (strain DSM 17436 / LMG 22146 / PsJN)</name>
    <name type="common">Burkholderia phytofirmans</name>
    <dbReference type="NCBI Taxonomy" id="398527"/>
    <lineage>
        <taxon>Bacteria</taxon>
        <taxon>Pseudomonadati</taxon>
        <taxon>Pseudomonadota</taxon>
        <taxon>Betaproteobacteria</taxon>
        <taxon>Burkholderiales</taxon>
        <taxon>Burkholderiaceae</taxon>
        <taxon>Paraburkholderia</taxon>
    </lineage>
</organism>
<keyword id="KW-0963">Cytoplasm</keyword>
<keyword id="KW-0690">Ribosome biogenesis</keyword>
<proteinExistence type="inferred from homology"/>
<sequence>MPKKRSSPNRNVQIADQIQRDLSDLLREVKDPRIGIVTIQSVELTPDYAHAKVYFTTLTGDPQQTLEALTHAAGHLHNQLFKRLHIHTVPTLHFHYDKTIERAVEMSRLIDEANANRAKED</sequence>
<evidence type="ECO:0000255" key="1">
    <source>
        <dbReference type="HAMAP-Rule" id="MF_00003"/>
    </source>
</evidence>
<comment type="function">
    <text evidence="1">One of several proteins that assist in the late maturation steps of the functional core of the 30S ribosomal subunit. Associates with free 30S ribosomal subunits (but not with 30S subunits that are part of 70S ribosomes or polysomes). Required for efficient processing of 16S rRNA. May interact with the 5'-terminal helix region of 16S rRNA.</text>
</comment>
<comment type="subunit">
    <text evidence="1">Monomer. Binds 30S ribosomal subunits, but not 50S ribosomal subunits or 70S ribosomes.</text>
</comment>
<comment type="subcellular location">
    <subcellularLocation>
        <location evidence="1">Cytoplasm</location>
    </subcellularLocation>
</comment>
<comment type="similarity">
    <text evidence="1">Belongs to the RbfA family.</text>
</comment>
<protein>
    <recommendedName>
        <fullName evidence="1">Ribosome-binding factor A</fullName>
    </recommendedName>
</protein>